<evidence type="ECO:0000255" key="1">
    <source>
        <dbReference type="HAMAP-Rule" id="MF_01871"/>
    </source>
</evidence>
<evidence type="ECO:0000256" key="2">
    <source>
        <dbReference type="SAM" id="MobiDB-lite"/>
    </source>
</evidence>
<gene>
    <name evidence="1" type="primary">dabA2</name>
    <name type="ordered locus">RB10314</name>
</gene>
<dbReference type="EMBL" id="BX294151">
    <property type="protein sequence ID" value="CAD78818.1"/>
    <property type="molecule type" value="Genomic_DNA"/>
</dbReference>
<dbReference type="RefSeq" id="NP_869361.1">
    <property type="nucleotide sequence ID" value="NC_005027.1"/>
</dbReference>
<dbReference type="RefSeq" id="WP_011122713.1">
    <property type="nucleotide sequence ID" value="NC_005027.1"/>
</dbReference>
<dbReference type="STRING" id="243090.RB10314"/>
<dbReference type="EnsemblBacteria" id="CAD78818">
    <property type="protein sequence ID" value="CAD78818"/>
    <property type="gene ID" value="RB10314"/>
</dbReference>
<dbReference type="KEGG" id="rba:RB10314"/>
<dbReference type="PATRIC" id="fig|243090.15.peg.4987"/>
<dbReference type="eggNOG" id="COG3002">
    <property type="taxonomic scope" value="Bacteria"/>
</dbReference>
<dbReference type="HOGENOM" id="CLU_009885_0_0_0"/>
<dbReference type="InParanoid" id="Q7UF65"/>
<dbReference type="OrthoDB" id="9805101at2"/>
<dbReference type="Proteomes" id="UP000001025">
    <property type="component" value="Chromosome"/>
</dbReference>
<dbReference type="GO" id="GO:0005886">
    <property type="term" value="C:plasma membrane"/>
    <property type="evidence" value="ECO:0007669"/>
    <property type="project" value="UniProtKB-SubCell"/>
</dbReference>
<dbReference type="GO" id="GO:0008270">
    <property type="term" value="F:zinc ion binding"/>
    <property type="evidence" value="ECO:0007669"/>
    <property type="project" value="UniProtKB-UniRule"/>
</dbReference>
<dbReference type="HAMAP" id="MF_01871">
    <property type="entry name" value="DabA"/>
    <property type="match status" value="1"/>
</dbReference>
<dbReference type="InterPro" id="IPR018752">
    <property type="entry name" value="DabA"/>
</dbReference>
<dbReference type="PANTHER" id="PTHR38344:SF1">
    <property type="entry name" value="INORGANIC CARBON TRANSPORTER SUBUNIT DABA-RELATED"/>
    <property type="match status" value="1"/>
</dbReference>
<dbReference type="PANTHER" id="PTHR38344">
    <property type="entry name" value="UPF0753 PROTEIN AQ_863"/>
    <property type="match status" value="1"/>
</dbReference>
<dbReference type="Pfam" id="PF10070">
    <property type="entry name" value="DabA"/>
    <property type="match status" value="1"/>
</dbReference>
<proteinExistence type="inferred from homology"/>
<reference key="1">
    <citation type="journal article" date="2003" name="Proc. Natl. Acad. Sci. U.S.A.">
        <title>Complete genome sequence of the marine planctomycete Pirellula sp. strain 1.</title>
        <authorList>
            <person name="Gloeckner F.O."/>
            <person name="Kube M."/>
            <person name="Bauer M."/>
            <person name="Teeling H."/>
            <person name="Lombardot T."/>
            <person name="Ludwig W."/>
            <person name="Gade D."/>
            <person name="Beck A."/>
            <person name="Borzym K."/>
            <person name="Heitmann K."/>
            <person name="Rabus R."/>
            <person name="Schlesner H."/>
            <person name="Amann R."/>
            <person name="Reinhardt R."/>
        </authorList>
    </citation>
    <scope>NUCLEOTIDE SEQUENCE [LARGE SCALE GENOMIC DNA]</scope>
    <source>
        <strain>DSM 10527 / NCIMB 13988 / SH1</strain>
    </source>
</reference>
<sequence>MSSGNTSSQNHSPVNNQPTRLKSPLPALHKDTQPNTSHQATNVLQAIEHARHFLPAQGPISVFVHHNTLHAFEDLPFEKAVIEGGRRFGCEPYLSEERYHQELLRGRISREDLREVLMADLQDDADKLVATFGTRYTLRLSMLQTELQPMPESGLSWVLAESELLKRFREEVPAPYREKTITQTRGWVMRHLEPITTDTTSSNPASPLPAPLQDRLKAAGESQIHRWNDQQWESFTLHALWETCQQGVEKAEVQTPNTASNDSLHRLMRGELGIDLKTKIDDVLIRFCGCFLDQGFADWKLPERENGFAKAFADLYLGRWAIRADWMKHVDASLREVQSPDWDAIQSIEQSLERMGISNNECEGFLSECLLSLRGWAGMIWQMETNGPFLANPIPEGSLNEYLAIRLILLAHAIEHFGKAKFNVGTASEILRLALKSADVRSASSVRSRTHTVFQLAQLGGWTPEQMLNMSSAQWRCLITEIESFASLDRRRLLHAAYERHYANQALDAISIHSRRRRELATNSRRRPAYAAIFCIDDREESFRRHLEEVAPDCRTASAAGFFAVAMYYQGADHASFRPLCPAIVKPQHYVREEPLFSSMAAGERRAVRRRRLGWFAHQVHQNSRTLIGGWVTGLFGAIATVPMVARILAPRLTSQIRESMGSLVRPPATELHLERLADAPGSDPASMGYSLDEMSQIVVRILQDIGMVDAFPPIIVFFGHGSGSLNNPHESAYNCGACSGGRGGPNARAFAVMANDPRVRRRVAEQGIELPDEVRFVGAYHNTCNDDVDYYDLDLLPRSLRELFRRIESDVIETRARNAHERARRFESAPLDLTPQEALEHVEERAEDLSQARPEYNHATNALVTVGRRDWSRGLFMDRRAFVTEYDPTVDDENGHILTRILQAAIPVCGGISLEYYFSTVDVEGYGCGSKLPHNVASMVGVMTGAASDLRPGLSQQMVEIHEPMRILFVIETTPEMLKKIISENEGIRRMVEGNWVQLAILDPSTYTIQRYIDGHFEPHVVTDREIPTVQSSMHWYRGQRDHLGFATIQESEIKTPVSSSESDANTSEVLV</sequence>
<feature type="chain" id="PRO_0000387290" description="Probable inorganic carbon transporter subunit DabA 2">
    <location>
        <begin position="1"/>
        <end position="1073"/>
    </location>
</feature>
<feature type="region of interest" description="Disordered" evidence="2">
    <location>
        <begin position="1"/>
        <end position="35"/>
    </location>
</feature>
<feature type="compositionally biased region" description="Polar residues" evidence="2">
    <location>
        <begin position="1"/>
        <end position="20"/>
    </location>
</feature>
<feature type="binding site" evidence="1">
    <location>
        <position position="535"/>
    </location>
    <ligand>
        <name>Zn(2+)</name>
        <dbReference type="ChEBI" id="CHEBI:29105"/>
    </ligand>
</feature>
<feature type="binding site" evidence="1">
    <location>
        <position position="537"/>
    </location>
    <ligand>
        <name>Zn(2+)</name>
        <dbReference type="ChEBI" id="CHEBI:29105"/>
    </ligand>
</feature>
<feature type="binding site" evidence="1">
    <location>
        <position position="721"/>
    </location>
    <ligand>
        <name>Zn(2+)</name>
        <dbReference type="ChEBI" id="CHEBI:29105"/>
    </ligand>
</feature>
<feature type="binding site" evidence="1">
    <location>
        <position position="736"/>
    </location>
    <ligand>
        <name>Zn(2+)</name>
        <dbReference type="ChEBI" id="CHEBI:29105"/>
    </ligand>
</feature>
<keyword id="KW-0997">Cell inner membrane</keyword>
<keyword id="KW-1003">Cell membrane</keyword>
<keyword id="KW-0472">Membrane</keyword>
<keyword id="KW-0479">Metal-binding</keyword>
<keyword id="KW-1185">Reference proteome</keyword>
<keyword id="KW-0813">Transport</keyword>
<keyword id="KW-0862">Zinc</keyword>
<organism>
    <name type="scientific">Rhodopirellula baltica (strain DSM 10527 / NCIMB 13988 / SH1)</name>
    <dbReference type="NCBI Taxonomy" id="243090"/>
    <lineage>
        <taxon>Bacteria</taxon>
        <taxon>Pseudomonadati</taxon>
        <taxon>Planctomycetota</taxon>
        <taxon>Planctomycetia</taxon>
        <taxon>Pirellulales</taxon>
        <taxon>Pirellulaceae</taxon>
        <taxon>Rhodopirellula</taxon>
    </lineage>
</organism>
<accession>Q7UF65</accession>
<protein>
    <recommendedName>
        <fullName evidence="1">Probable inorganic carbon transporter subunit DabA 2</fullName>
    </recommendedName>
</protein>
<name>DABA2_RHOBA</name>
<comment type="function">
    <text evidence="1">Part of an energy-coupled inorganic carbon pump.</text>
</comment>
<comment type="cofactor">
    <cofactor evidence="1">
        <name>Zn(2+)</name>
        <dbReference type="ChEBI" id="CHEBI:29105"/>
    </cofactor>
</comment>
<comment type="subunit">
    <text evidence="1">Forms a complex with DabB.</text>
</comment>
<comment type="subcellular location">
    <subcellularLocation>
        <location evidence="1">Cell inner membrane</location>
        <topology evidence="1">Peripheral membrane protein</topology>
    </subcellularLocation>
</comment>
<comment type="similarity">
    <text evidence="1">Belongs to the inorganic carbon transporter (TC 9.A.2) DabA family.</text>
</comment>